<comment type="function">
    <text evidence="1">Catalyzes the specific phosphorylation of the 3-hydroxyl group of shikimic acid using ATP as a cosubstrate.</text>
</comment>
<comment type="catalytic activity">
    <reaction evidence="1">
        <text>shikimate + ATP = 3-phosphoshikimate + ADP + H(+)</text>
        <dbReference type="Rhea" id="RHEA:13121"/>
        <dbReference type="ChEBI" id="CHEBI:15378"/>
        <dbReference type="ChEBI" id="CHEBI:30616"/>
        <dbReference type="ChEBI" id="CHEBI:36208"/>
        <dbReference type="ChEBI" id="CHEBI:145989"/>
        <dbReference type="ChEBI" id="CHEBI:456216"/>
        <dbReference type="EC" id="2.7.1.71"/>
    </reaction>
</comment>
<comment type="cofactor">
    <cofactor evidence="1">
        <name>Mg(2+)</name>
        <dbReference type="ChEBI" id="CHEBI:18420"/>
    </cofactor>
    <text evidence="1">Binds 1 Mg(2+) ion per subunit.</text>
</comment>
<comment type="pathway">
    <text evidence="1">Metabolic intermediate biosynthesis; chorismate biosynthesis; chorismate from D-erythrose 4-phosphate and phosphoenolpyruvate: step 5/7.</text>
</comment>
<comment type="subunit">
    <text evidence="1">Monomer.</text>
</comment>
<comment type="subcellular location">
    <subcellularLocation>
        <location evidence="1">Cytoplasm</location>
    </subcellularLocation>
</comment>
<comment type="similarity">
    <text evidence="1">Belongs to the shikimate kinase family.</text>
</comment>
<gene>
    <name evidence="1" type="primary">aroK</name>
    <name type="ordered locus">BQ2027_MB2568C</name>
</gene>
<name>AROK_MYCBO</name>
<accession>P0A4Z3</accession>
<accession>A0A1R3Y3M2</accession>
<accession>P95014</accession>
<accession>X2BLN0</accession>
<feature type="chain" id="PRO_0000192391" description="Shikimate kinase">
    <location>
        <begin position="1"/>
        <end position="176"/>
    </location>
</feature>
<feature type="binding site" evidence="1">
    <location>
        <begin position="12"/>
        <end position="17"/>
    </location>
    <ligand>
        <name>ATP</name>
        <dbReference type="ChEBI" id="CHEBI:30616"/>
    </ligand>
</feature>
<feature type="binding site" evidence="1">
    <location>
        <position position="16"/>
    </location>
    <ligand>
        <name>Mg(2+)</name>
        <dbReference type="ChEBI" id="CHEBI:18420"/>
    </ligand>
</feature>
<feature type="binding site" evidence="1">
    <location>
        <position position="34"/>
    </location>
    <ligand>
        <name>substrate</name>
    </ligand>
</feature>
<feature type="binding site" evidence="1">
    <location>
        <position position="58"/>
    </location>
    <ligand>
        <name>substrate</name>
    </ligand>
</feature>
<feature type="binding site" evidence="1">
    <location>
        <position position="80"/>
    </location>
    <ligand>
        <name>substrate</name>
    </ligand>
</feature>
<feature type="binding site" evidence="1">
    <location>
        <position position="117"/>
    </location>
    <ligand>
        <name>ATP</name>
        <dbReference type="ChEBI" id="CHEBI:30616"/>
    </ligand>
</feature>
<feature type="binding site" evidence="1">
    <location>
        <position position="136"/>
    </location>
    <ligand>
        <name>substrate</name>
    </ligand>
</feature>
<feature type="binding site" evidence="1">
    <location>
        <position position="153"/>
    </location>
    <ligand>
        <name>ATP</name>
        <dbReference type="ChEBI" id="CHEBI:30616"/>
    </ligand>
</feature>
<keyword id="KW-0028">Amino-acid biosynthesis</keyword>
<keyword id="KW-0057">Aromatic amino acid biosynthesis</keyword>
<keyword id="KW-0067">ATP-binding</keyword>
<keyword id="KW-0963">Cytoplasm</keyword>
<keyword id="KW-0418">Kinase</keyword>
<keyword id="KW-0460">Magnesium</keyword>
<keyword id="KW-0479">Metal-binding</keyword>
<keyword id="KW-0547">Nucleotide-binding</keyword>
<keyword id="KW-1185">Reference proteome</keyword>
<keyword id="KW-0808">Transferase</keyword>
<evidence type="ECO:0000255" key="1">
    <source>
        <dbReference type="HAMAP-Rule" id="MF_00109"/>
    </source>
</evidence>
<organism>
    <name type="scientific">Mycobacterium bovis (strain ATCC BAA-935 / AF2122/97)</name>
    <dbReference type="NCBI Taxonomy" id="233413"/>
    <lineage>
        <taxon>Bacteria</taxon>
        <taxon>Bacillati</taxon>
        <taxon>Actinomycetota</taxon>
        <taxon>Actinomycetes</taxon>
        <taxon>Mycobacteriales</taxon>
        <taxon>Mycobacteriaceae</taxon>
        <taxon>Mycobacterium</taxon>
        <taxon>Mycobacterium tuberculosis complex</taxon>
    </lineage>
</organism>
<dbReference type="EC" id="2.7.1.71" evidence="1"/>
<dbReference type="EMBL" id="LT708304">
    <property type="protein sequence ID" value="SIU01185.1"/>
    <property type="molecule type" value="Genomic_DNA"/>
</dbReference>
<dbReference type="RefSeq" id="NP_856214.1">
    <property type="nucleotide sequence ID" value="NC_002945.3"/>
</dbReference>
<dbReference type="RefSeq" id="WP_003413021.1">
    <property type="nucleotide sequence ID" value="NC_002945.4"/>
</dbReference>
<dbReference type="SMR" id="P0A4Z3"/>
<dbReference type="KEGG" id="mbo:BQ2027_MB2568C"/>
<dbReference type="PATRIC" id="fig|233413.5.peg.2825"/>
<dbReference type="UniPathway" id="UPA00053">
    <property type="reaction ID" value="UER00088"/>
</dbReference>
<dbReference type="Proteomes" id="UP000001419">
    <property type="component" value="Chromosome"/>
</dbReference>
<dbReference type="GO" id="GO:0005829">
    <property type="term" value="C:cytosol"/>
    <property type="evidence" value="ECO:0007669"/>
    <property type="project" value="TreeGrafter"/>
</dbReference>
<dbReference type="GO" id="GO:0005524">
    <property type="term" value="F:ATP binding"/>
    <property type="evidence" value="ECO:0007669"/>
    <property type="project" value="UniProtKB-UniRule"/>
</dbReference>
<dbReference type="GO" id="GO:0000287">
    <property type="term" value="F:magnesium ion binding"/>
    <property type="evidence" value="ECO:0007669"/>
    <property type="project" value="UniProtKB-UniRule"/>
</dbReference>
<dbReference type="GO" id="GO:0004765">
    <property type="term" value="F:shikimate kinase activity"/>
    <property type="evidence" value="ECO:0007669"/>
    <property type="project" value="UniProtKB-UniRule"/>
</dbReference>
<dbReference type="GO" id="GO:0008652">
    <property type="term" value="P:amino acid biosynthetic process"/>
    <property type="evidence" value="ECO:0007669"/>
    <property type="project" value="UniProtKB-KW"/>
</dbReference>
<dbReference type="GO" id="GO:0009073">
    <property type="term" value="P:aromatic amino acid family biosynthetic process"/>
    <property type="evidence" value="ECO:0007669"/>
    <property type="project" value="UniProtKB-KW"/>
</dbReference>
<dbReference type="GO" id="GO:0009423">
    <property type="term" value="P:chorismate biosynthetic process"/>
    <property type="evidence" value="ECO:0007669"/>
    <property type="project" value="UniProtKB-UniRule"/>
</dbReference>
<dbReference type="CDD" id="cd00464">
    <property type="entry name" value="SK"/>
    <property type="match status" value="1"/>
</dbReference>
<dbReference type="FunFam" id="3.40.50.300:FF:002320">
    <property type="entry name" value="Shikimate kinase"/>
    <property type="match status" value="1"/>
</dbReference>
<dbReference type="Gene3D" id="3.40.50.300">
    <property type="entry name" value="P-loop containing nucleotide triphosphate hydrolases"/>
    <property type="match status" value="1"/>
</dbReference>
<dbReference type="HAMAP" id="MF_00109">
    <property type="entry name" value="Shikimate_kinase"/>
    <property type="match status" value="1"/>
</dbReference>
<dbReference type="InterPro" id="IPR027417">
    <property type="entry name" value="P-loop_NTPase"/>
</dbReference>
<dbReference type="InterPro" id="IPR031322">
    <property type="entry name" value="Shikimate/glucono_kinase"/>
</dbReference>
<dbReference type="InterPro" id="IPR000623">
    <property type="entry name" value="Shikimate_kinase/TSH1"/>
</dbReference>
<dbReference type="InterPro" id="IPR023000">
    <property type="entry name" value="Shikimate_kinase_CS"/>
</dbReference>
<dbReference type="PANTHER" id="PTHR21087">
    <property type="entry name" value="SHIKIMATE KINASE"/>
    <property type="match status" value="1"/>
</dbReference>
<dbReference type="PANTHER" id="PTHR21087:SF16">
    <property type="entry name" value="SHIKIMATE KINASE 1, CHLOROPLASTIC"/>
    <property type="match status" value="1"/>
</dbReference>
<dbReference type="Pfam" id="PF01202">
    <property type="entry name" value="SKI"/>
    <property type="match status" value="1"/>
</dbReference>
<dbReference type="PRINTS" id="PR01100">
    <property type="entry name" value="SHIKIMTKNASE"/>
</dbReference>
<dbReference type="SUPFAM" id="SSF52540">
    <property type="entry name" value="P-loop containing nucleoside triphosphate hydrolases"/>
    <property type="match status" value="1"/>
</dbReference>
<dbReference type="PROSITE" id="PS01128">
    <property type="entry name" value="SHIKIMATE_KINASE"/>
    <property type="match status" value="1"/>
</dbReference>
<sequence length="176" mass="18583">MAPKAVLVGLPGSGKSTIGRRLAKALGVGLLDTDVAIEQRTGRSIADIFATDGEQEFRRIEEDVVRAALADHDGVLSLGGGAVTSPGVRAALAGHTVVYLEISAAEGVRRTGGNTVRPLLAGPDRAEKYRALMAKRAPLYRRVATMRVDTNRRNPGAVVRHILSRLQVPSPSEAAT</sequence>
<proteinExistence type="inferred from homology"/>
<reference key="1">
    <citation type="journal article" date="2003" name="Proc. Natl. Acad. Sci. U.S.A.">
        <title>The complete genome sequence of Mycobacterium bovis.</title>
        <authorList>
            <person name="Garnier T."/>
            <person name="Eiglmeier K."/>
            <person name="Camus J.-C."/>
            <person name="Medina N."/>
            <person name="Mansoor H."/>
            <person name="Pryor M."/>
            <person name="Duthoy S."/>
            <person name="Grondin S."/>
            <person name="Lacroix C."/>
            <person name="Monsempe C."/>
            <person name="Simon S."/>
            <person name="Harris B."/>
            <person name="Atkin R."/>
            <person name="Doggett J."/>
            <person name="Mayes R."/>
            <person name="Keating L."/>
            <person name="Wheeler P.R."/>
            <person name="Parkhill J."/>
            <person name="Barrell B.G."/>
            <person name="Cole S.T."/>
            <person name="Gordon S.V."/>
            <person name="Hewinson R.G."/>
        </authorList>
    </citation>
    <scope>NUCLEOTIDE SEQUENCE [LARGE SCALE GENOMIC DNA]</scope>
    <source>
        <strain>ATCC BAA-935 / AF2122/97</strain>
    </source>
</reference>
<reference key="2">
    <citation type="journal article" date="2017" name="Genome Announc.">
        <title>Updated reference genome sequence and annotation of Mycobacterium bovis AF2122/97.</title>
        <authorList>
            <person name="Malone K.M."/>
            <person name="Farrell D."/>
            <person name="Stuber T.P."/>
            <person name="Schubert O.T."/>
            <person name="Aebersold R."/>
            <person name="Robbe-Austerman S."/>
            <person name="Gordon S.V."/>
        </authorList>
    </citation>
    <scope>NUCLEOTIDE SEQUENCE [LARGE SCALE GENOMIC DNA]</scope>
    <scope>GENOME REANNOTATION</scope>
    <source>
        <strain>ATCC BAA-935 / AF2122/97</strain>
    </source>
</reference>
<protein>
    <recommendedName>
        <fullName evidence="1">Shikimate kinase</fullName>
        <shortName evidence="1">SK</shortName>
        <ecNumber evidence="1">2.7.1.71</ecNumber>
    </recommendedName>
</protein>